<organism>
    <name type="scientific">Pseudomonas putida (strain ATCC 47054 / DSM 6125 / CFBP 8728 / NCIMB 11950 / KT2440)</name>
    <dbReference type="NCBI Taxonomy" id="160488"/>
    <lineage>
        <taxon>Bacteria</taxon>
        <taxon>Pseudomonadati</taxon>
        <taxon>Pseudomonadota</taxon>
        <taxon>Gammaproteobacteria</taxon>
        <taxon>Pseudomonadales</taxon>
        <taxon>Pseudomonadaceae</taxon>
        <taxon>Pseudomonas</taxon>
    </lineage>
</organism>
<comment type="function">
    <text evidence="1">Confers DNA tethering and processivity to DNA polymerases and other proteins. Acts as a clamp, forming a ring around DNA (a reaction catalyzed by the clamp-loading complex) which diffuses in an ATP-independent manner freely and bidirectionally along dsDNA. Initially characterized for its ability to contact the catalytic subunit of DNA polymerase III (Pol III), a complex, multichain enzyme responsible for most of the replicative synthesis in bacteria; Pol III exhibits 3'-5' exonuclease proofreading activity. The beta chain is required for initiation of replication as well as for processivity of DNA replication.</text>
</comment>
<comment type="subunit">
    <text evidence="1">Forms a ring-shaped head-to-tail homodimer around DNA which binds and tethers DNA polymerases and other proteins to the DNA. The DNA replisome complex has a single clamp-loading complex (3 tau and 1 each of delta, delta', psi and chi subunits) which binds 3 Pol III cores (1 core on the leading strand and 2 on the lagging strand) each with a beta sliding clamp dimer. Additional proteins in the replisome are other copies of gamma, psi and chi, Ssb, DNA helicase and RNA primase.</text>
</comment>
<comment type="subcellular location">
    <subcellularLocation>
        <location evidence="1">Cytoplasm</location>
    </subcellularLocation>
</comment>
<comment type="similarity">
    <text evidence="2">Belongs to the beta sliding clamp family.</text>
</comment>
<protein>
    <recommendedName>
        <fullName>Beta sliding clamp</fullName>
        <shortName>Beta clamp</shortName>
        <shortName>Sliding clamp</shortName>
    </recommendedName>
    <alternativeName>
        <fullName>Beta-clamp processivity factor</fullName>
    </alternativeName>
    <alternativeName>
        <fullName>DNA polymerase III beta sliding clamp subunit</fullName>
    </alternativeName>
    <alternativeName>
        <fullName>DNA polymerase III subunit beta</fullName>
    </alternativeName>
</protein>
<name>DPO3B_PSEPK</name>
<feature type="chain" id="PRO_0000105454" description="Beta sliding clamp">
    <location>
        <begin position="1"/>
        <end position="367"/>
    </location>
</feature>
<keyword id="KW-0963">Cytoplasm</keyword>
<keyword id="KW-0235">DNA replication</keyword>
<keyword id="KW-0238">DNA-binding</keyword>
<keyword id="KW-0239">DNA-directed DNA polymerase</keyword>
<keyword id="KW-0548">Nucleotidyltransferase</keyword>
<keyword id="KW-1185">Reference proteome</keyword>
<keyword id="KW-0808">Transferase</keyword>
<reference key="1">
    <citation type="journal article" date="2002" name="Environ. Microbiol.">
        <title>Complete genome sequence and comparative analysis of the metabolically versatile Pseudomonas putida KT2440.</title>
        <authorList>
            <person name="Nelson K.E."/>
            <person name="Weinel C."/>
            <person name="Paulsen I.T."/>
            <person name="Dodson R.J."/>
            <person name="Hilbert H."/>
            <person name="Martins dos Santos V.A.P."/>
            <person name="Fouts D.E."/>
            <person name="Gill S.R."/>
            <person name="Pop M."/>
            <person name="Holmes M."/>
            <person name="Brinkac L.M."/>
            <person name="Beanan M.J."/>
            <person name="DeBoy R.T."/>
            <person name="Daugherty S.C."/>
            <person name="Kolonay J.F."/>
            <person name="Madupu R."/>
            <person name="Nelson W.C."/>
            <person name="White O."/>
            <person name="Peterson J.D."/>
            <person name="Khouri H.M."/>
            <person name="Hance I."/>
            <person name="Chris Lee P."/>
            <person name="Holtzapple E.K."/>
            <person name="Scanlan D."/>
            <person name="Tran K."/>
            <person name="Moazzez A."/>
            <person name="Utterback T.R."/>
            <person name="Rizzo M."/>
            <person name="Lee K."/>
            <person name="Kosack D."/>
            <person name="Moestl D."/>
            <person name="Wedler H."/>
            <person name="Lauber J."/>
            <person name="Stjepandic D."/>
            <person name="Hoheisel J."/>
            <person name="Straetz M."/>
            <person name="Heim S."/>
            <person name="Kiewitz C."/>
            <person name="Eisen J.A."/>
            <person name="Timmis K.N."/>
            <person name="Duesterhoeft A."/>
            <person name="Tuemmler B."/>
            <person name="Fraser C.M."/>
        </authorList>
    </citation>
    <scope>NUCLEOTIDE SEQUENCE [LARGE SCALE GENOMIC DNA]</scope>
    <source>
        <strain>ATCC 47054 / DSM 6125 / CFBP 8728 / NCIMB 11950 / KT2440</strain>
    </source>
</reference>
<proteinExistence type="inferred from homology"/>
<sequence length="367" mass="40719">MHFTIQREALLKPLQLVAGVVERRQTLPVLSNVLLVVQGQQLSLTGTDLEVELVGRVQLEEPAEPGEITVPARKLMDICKSLPNDALIDIKVDEQKLLVKAGRSRFTLSTLPANDFPTVEEGPGSLTCNLEQSKLRRLIERTSFAMAQQDVRYYLNGMLLEVSRNTLRAVSTDGHRLALCSMSAPIEQEDRHQVIVPRKGILELARLLTDPEGMVSIVLGQHHIRATTGEFTFTSKLVDGKFPDYERVLPKGGDKLVVGDRQALREAFSRTAILSNEKYRGIRLQLAAGQLKIQANNPEQEEAEEEISVDYEGSSLEIGFNVSYLLDVLGVMTTEQVRLILSDSNSSALLQEAGNDDSSYVVMPMRL</sequence>
<accession>P0A120</accession>
<accession>P13455</accession>
<dbReference type="EMBL" id="AE015451">
    <property type="protein sequence ID" value="AAN65645.1"/>
    <property type="molecule type" value="Genomic_DNA"/>
</dbReference>
<dbReference type="RefSeq" id="NP_742181.1">
    <property type="nucleotide sequence ID" value="NC_002947.4"/>
</dbReference>
<dbReference type="RefSeq" id="WP_003253156.1">
    <property type="nucleotide sequence ID" value="NZ_CP169744.1"/>
</dbReference>
<dbReference type="SMR" id="P0A120"/>
<dbReference type="STRING" id="160488.PP_0011"/>
<dbReference type="PaxDb" id="160488-PP_0011"/>
<dbReference type="GeneID" id="83677291"/>
<dbReference type="KEGG" id="ppu:PP_0011"/>
<dbReference type="PATRIC" id="fig|160488.4.peg.11"/>
<dbReference type="eggNOG" id="COG0592">
    <property type="taxonomic scope" value="Bacteria"/>
</dbReference>
<dbReference type="HOGENOM" id="CLU_038149_4_2_6"/>
<dbReference type="OrthoDB" id="8421503at2"/>
<dbReference type="PhylomeDB" id="P0A120"/>
<dbReference type="BioCyc" id="PPUT160488:G1G01-11-MONOMER"/>
<dbReference type="Proteomes" id="UP000000556">
    <property type="component" value="Chromosome"/>
</dbReference>
<dbReference type="GO" id="GO:0005737">
    <property type="term" value="C:cytoplasm"/>
    <property type="evidence" value="ECO:0007669"/>
    <property type="project" value="UniProtKB-SubCell"/>
</dbReference>
<dbReference type="GO" id="GO:0009360">
    <property type="term" value="C:DNA polymerase III complex"/>
    <property type="evidence" value="ECO:0007669"/>
    <property type="project" value="InterPro"/>
</dbReference>
<dbReference type="GO" id="GO:0008408">
    <property type="term" value="F:3'-5' exonuclease activity"/>
    <property type="evidence" value="ECO:0007669"/>
    <property type="project" value="InterPro"/>
</dbReference>
<dbReference type="GO" id="GO:0003677">
    <property type="term" value="F:DNA binding"/>
    <property type="evidence" value="ECO:0007669"/>
    <property type="project" value="UniProtKB-KW"/>
</dbReference>
<dbReference type="GO" id="GO:0003887">
    <property type="term" value="F:DNA-directed DNA polymerase activity"/>
    <property type="evidence" value="ECO:0007669"/>
    <property type="project" value="UniProtKB-KW"/>
</dbReference>
<dbReference type="GO" id="GO:0006271">
    <property type="term" value="P:DNA strand elongation involved in DNA replication"/>
    <property type="evidence" value="ECO:0007669"/>
    <property type="project" value="TreeGrafter"/>
</dbReference>
<dbReference type="CDD" id="cd00140">
    <property type="entry name" value="beta_clamp"/>
    <property type="match status" value="1"/>
</dbReference>
<dbReference type="FunFam" id="3.10.150.10:FF:000001">
    <property type="entry name" value="Beta sliding clamp"/>
    <property type="match status" value="1"/>
</dbReference>
<dbReference type="Gene3D" id="3.70.10.10">
    <property type="match status" value="1"/>
</dbReference>
<dbReference type="Gene3D" id="3.10.150.10">
    <property type="entry name" value="DNA Polymerase III, subunit A, domain 2"/>
    <property type="match status" value="1"/>
</dbReference>
<dbReference type="InterPro" id="IPR046938">
    <property type="entry name" value="DNA_clamp_sf"/>
</dbReference>
<dbReference type="InterPro" id="IPR001001">
    <property type="entry name" value="DNA_polIII_beta"/>
</dbReference>
<dbReference type="InterPro" id="IPR022635">
    <property type="entry name" value="DNA_polIII_beta_C"/>
</dbReference>
<dbReference type="InterPro" id="IPR022637">
    <property type="entry name" value="DNA_polIII_beta_cen"/>
</dbReference>
<dbReference type="InterPro" id="IPR022634">
    <property type="entry name" value="DNA_polIII_beta_N"/>
</dbReference>
<dbReference type="NCBIfam" id="TIGR00663">
    <property type="entry name" value="dnan"/>
    <property type="match status" value="1"/>
</dbReference>
<dbReference type="PANTHER" id="PTHR30478:SF0">
    <property type="entry name" value="BETA SLIDING CLAMP"/>
    <property type="match status" value="1"/>
</dbReference>
<dbReference type="PANTHER" id="PTHR30478">
    <property type="entry name" value="DNA POLYMERASE III SUBUNIT BETA"/>
    <property type="match status" value="1"/>
</dbReference>
<dbReference type="Pfam" id="PF00712">
    <property type="entry name" value="DNA_pol3_beta"/>
    <property type="match status" value="1"/>
</dbReference>
<dbReference type="Pfam" id="PF02767">
    <property type="entry name" value="DNA_pol3_beta_2"/>
    <property type="match status" value="1"/>
</dbReference>
<dbReference type="Pfam" id="PF02768">
    <property type="entry name" value="DNA_pol3_beta_3"/>
    <property type="match status" value="1"/>
</dbReference>
<dbReference type="PIRSF" id="PIRSF000804">
    <property type="entry name" value="DNA_pol_III_b"/>
    <property type="match status" value="1"/>
</dbReference>
<dbReference type="SMART" id="SM00480">
    <property type="entry name" value="POL3Bc"/>
    <property type="match status" value="1"/>
</dbReference>
<dbReference type="SUPFAM" id="SSF55979">
    <property type="entry name" value="DNA clamp"/>
    <property type="match status" value="3"/>
</dbReference>
<evidence type="ECO:0000250" key="1">
    <source>
        <dbReference type="UniProtKB" id="P0A988"/>
    </source>
</evidence>
<evidence type="ECO:0000305" key="2"/>
<gene>
    <name type="primary">dnaN</name>
    <name type="ordered locus">PP_0011</name>
</gene>